<sequence length="145" mass="16200">MRTTYMAKPGEVERKWYVIDATGVSLGRLSSEVASILRGKNKPQFTPHIDTGDFVIIINAGKIGLTGKKATDKIYYRHSQYPGGLKSRTAGEMRTNNPEKLLELSIKGMLPKNSLGRQLFKKLHVYGGSEHEHAAQQPEVYELRG</sequence>
<accession>B8DB43</accession>
<gene>
    <name evidence="1" type="primary">rplM</name>
    <name type="ordered locus">LMHCC_2937</name>
</gene>
<protein>
    <recommendedName>
        <fullName evidence="1">Large ribosomal subunit protein uL13</fullName>
    </recommendedName>
    <alternativeName>
        <fullName evidence="2">50S ribosomal protein L13</fullName>
    </alternativeName>
</protein>
<organism>
    <name type="scientific">Listeria monocytogenes serotype 4a (strain HCC23)</name>
    <dbReference type="NCBI Taxonomy" id="552536"/>
    <lineage>
        <taxon>Bacteria</taxon>
        <taxon>Bacillati</taxon>
        <taxon>Bacillota</taxon>
        <taxon>Bacilli</taxon>
        <taxon>Bacillales</taxon>
        <taxon>Listeriaceae</taxon>
        <taxon>Listeria</taxon>
    </lineage>
</organism>
<dbReference type="EMBL" id="CP001175">
    <property type="protein sequence ID" value="ACK41268.1"/>
    <property type="molecule type" value="Genomic_DNA"/>
</dbReference>
<dbReference type="RefSeq" id="WP_003727703.1">
    <property type="nucleotide sequence ID" value="NC_011660.1"/>
</dbReference>
<dbReference type="SMR" id="B8DB43"/>
<dbReference type="GeneID" id="61190471"/>
<dbReference type="KEGG" id="lmh:LMHCC_2937"/>
<dbReference type="HOGENOM" id="CLU_082184_2_2_9"/>
<dbReference type="GO" id="GO:0022625">
    <property type="term" value="C:cytosolic large ribosomal subunit"/>
    <property type="evidence" value="ECO:0007669"/>
    <property type="project" value="TreeGrafter"/>
</dbReference>
<dbReference type="GO" id="GO:0003729">
    <property type="term" value="F:mRNA binding"/>
    <property type="evidence" value="ECO:0007669"/>
    <property type="project" value="TreeGrafter"/>
</dbReference>
<dbReference type="GO" id="GO:0003735">
    <property type="term" value="F:structural constituent of ribosome"/>
    <property type="evidence" value="ECO:0007669"/>
    <property type="project" value="InterPro"/>
</dbReference>
<dbReference type="GO" id="GO:0017148">
    <property type="term" value="P:negative regulation of translation"/>
    <property type="evidence" value="ECO:0007669"/>
    <property type="project" value="TreeGrafter"/>
</dbReference>
<dbReference type="GO" id="GO:0006412">
    <property type="term" value="P:translation"/>
    <property type="evidence" value="ECO:0007669"/>
    <property type="project" value="UniProtKB-UniRule"/>
</dbReference>
<dbReference type="CDD" id="cd00392">
    <property type="entry name" value="Ribosomal_L13"/>
    <property type="match status" value="1"/>
</dbReference>
<dbReference type="FunFam" id="3.90.1180.10:FF:000001">
    <property type="entry name" value="50S ribosomal protein L13"/>
    <property type="match status" value="1"/>
</dbReference>
<dbReference type="Gene3D" id="3.90.1180.10">
    <property type="entry name" value="Ribosomal protein L13"/>
    <property type="match status" value="1"/>
</dbReference>
<dbReference type="HAMAP" id="MF_01366">
    <property type="entry name" value="Ribosomal_uL13"/>
    <property type="match status" value="1"/>
</dbReference>
<dbReference type="InterPro" id="IPR005822">
    <property type="entry name" value="Ribosomal_uL13"/>
</dbReference>
<dbReference type="InterPro" id="IPR005823">
    <property type="entry name" value="Ribosomal_uL13_bac-type"/>
</dbReference>
<dbReference type="InterPro" id="IPR023563">
    <property type="entry name" value="Ribosomal_uL13_CS"/>
</dbReference>
<dbReference type="InterPro" id="IPR036899">
    <property type="entry name" value="Ribosomal_uL13_sf"/>
</dbReference>
<dbReference type="NCBIfam" id="TIGR01066">
    <property type="entry name" value="rplM_bact"/>
    <property type="match status" value="1"/>
</dbReference>
<dbReference type="PANTHER" id="PTHR11545:SF2">
    <property type="entry name" value="LARGE RIBOSOMAL SUBUNIT PROTEIN UL13M"/>
    <property type="match status" value="1"/>
</dbReference>
<dbReference type="PANTHER" id="PTHR11545">
    <property type="entry name" value="RIBOSOMAL PROTEIN L13"/>
    <property type="match status" value="1"/>
</dbReference>
<dbReference type="Pfam" id="PF00572">
    <property type="entry name" value="Ribosomal_L13"/>
    <property type="match status" value="1"/>
</dbReference>
<dbReference type="PIRSF" id="PIRSF002181">
    <property type="entry name" value="Ribosomal_L13"/>
    <property type="match status" value="1"/>
</dbReference>
<dbReference type="SUPFAM" id="SSF52161">
    <property type="entry name" value="Ribosomal protein L13"/>
    <property type="match status" value="1"/>
</dbReference>
<dbReference type="PROSITE" id="PS00783">
    <property type="entry name" value="RIBOSOMAL_L13"/>
    <property type="match status" value="1"/>
</dbReference>
<feature type="chain" id="PRO_1000166872" description="Large ribosomal subunit protein uL13">
    <location>
        <begin position="1"/>
        <end position="145"/>
    </location>
</feature>
<proteinExistence type="inferred from homology"/>
<comment type="function">
    <text evidence="1">This protein is one of the early assembly proteins of the 50S ribosomal subunit, although it is not seen to bind rRNA by itself. It is important during the early stages of 50S assembly.</text>
</comment>
<comment type="subunit">
    <text evidence="1">Part of the 50S ribosomal subunit.</text>
</comment>
<comment type="similarity">
    <text evidence="1">Belongs to the universal ribosomal protein uL13 family.</text>
</comment>
<reference key="1">
    <citation type="journal article" date="2011" name="J. Bacteriol.">
        <title>Genome sequence of lineage III Listeria monocytogenes strain HCC23.</title>
        <authorList>
            <person name="Steele C.L."/>
            <person name="Donaldson J.R."/>
            <person name="Paul D."/>
            <person name="Banes M.M."/>
            <person name="Arick T."/>
            <person name="Bridges S.M."/>
            <person name="Lawrence M.L."/>
        </authorList>
    </citation>
    <scope>NUCLEOTIDE SEQUENCE [LARGE SCALE GENOMIC DNA]</scope>
    <source>
        <strain>HCC23</strain>
    </source>
</reference>
<evidence type="ECO:0000255" key="1">
    <source>
        <dbReference type="HAMAP-Rule" id="MF_01366"/>
    </source>
</evidence>
<evidence type="ECO:0000305" key="2"/>
<name>RL13_LISMH</name>
<keyword id="KW-0687">Ribonucleoprotein</keyword>
<keyword id="KW-0689">Ribosomal protein</keyword>